<name>RL35_CHLP8</name>
<keyword id="KW-0687">Ribonucleoprotein</keyword>
<keyword id="KW-0689">Ribosomal protein</keyword>
<evidence type="ECO:0000255" key="1">
    <source>
        <dbReference type="HAMAP-Rule" id="MF_00514"/>
    </source>
</evidence>
<evidence type="ECO:0000256" key="2">
    <source>
        <dbReference type="SAM" id="MobiDB-lite"/>
    </source>
</evidence>
<evidence type="ECO:0000305" key="3"/>
<accession>B3QRM2</accession>
<reference key="1">
    <citation type="submission" date="2008-06" db="EMBL/GenBank/DDBJ databases">
        <title>Complete sequence of Chlorobaculum parvum NCIB 8327.</title>
        <authorList>
            <consortium name="US DOE Joint Genome Institute"/>
            <person name="Lucas S."/>
            <person name="Copeland A."/>
            <person name="Lapidus A."/>
            <person name="Glavina del Rio T."/>
            <person name="Dalin E."/>
            <person name="Tice H."/>
            <person name="Bruce D."/>
            <person name="Goodwin L."/>
            <person name="Pitluck S."/>
            <person name="Schmutz J."/>
            <person name="Larimer F."/>
            <person name="Land M."/>
            <person name="Hauser L."/>
            <person name="Kyrpides N."/>
            <person name="Mikhailova N."/>
            <person name="Zhao F."/>
            <person name="Li T."/>
            <person name="Liu Z."/>
            <person name="Overmann J."/>
            <person name="Bryant D.A."/>
            <person name="Richardson P."/>
        </authorList>
    </citation>
    <scope>NUCLEOTIDE SEQUENCE [LARGE SCALE GENOMIC DNA]</scope>
    <source>
        <strain>DSM 263 / NCIMB 8327</strain>
    </source>
</reference>
<comment type="similarity">
    <text evidence="1">Belongs to the bacterial ribosomal protein bL35 family.</text>
</comment>
<proteinExistence type="inferred from homology"/>
<protein>
    <recommendedName>
        <fullName evidence="1">Large ribosomal subunit protein bL35</fullName>
    </recommendedName>
    <alternativeName>
        <fullName evidence="3">50S ribosomal protein L35</fullName>
    </alternativeName>
</protein>
<sequence length="64" mass="7514">MPKMKSHRGACKRFKATGSGKVKRERMNGSHNLEHKNRKRTRRLHQSTLVDSTKEKQIKRMILA</sequence>
<organism>
    <name type="scientific">Chlorobaculum parvum (strain DSM 263 / NCIMB 8327)</name>
    <name type="common">Chlorobium vibrioforme subsp. thiosulfatophilum</name>
    <dbReference type="NCBI Taxonomy" id="517417"/>
    <lineage>
        <taxon>Bacteria</taxon>
        <taxon>Pseudomonadati</taxon>
        <taxon>Chlorobiota</taxon>
        <taxon>Chlorobiia</taxon>
        <taxon>Chlorobiales</taxon>
        <taxon>Chlorobiaceae</taxon>
        <taxon>Chlorobaculum</taxon>
    </lineage>
</organism>
<feature type="chain" id="PRO_1000127323" description="Large ribosomal subunit protein bL35">
    <location>
        <begin position="1"/>
        <end position="64"/>
    </location>
</feature>
<feature type="region of interest" description="Disordered" evidence="2">
    <location>
        <begin position="17"/>
        <end position="41"/>
    </location>
</feature>
<feature type="compositionally biased region" description="Basic and acidic residues" evidence="2">
    <location>
        <begin position="25"/>
        <end position="35"/>
    </location>
</feature>
<dbReference type="EMBL" id="CP001099">
    <property type="protein sequence ID" value="ACF10544.1"/>
    <property type="molecule type" value="Genomic_DNA"/>
</dbReference>
<dbReference type="RefSeq" id="WP_012501379.1">
    <property type="nucleotide sequence ID" value="NC_011027.1"/>
</dbReference>
<dbReference type="SMR" id="B3QRM2"/>
<dbReference type="STRING" id="517417.Cpar_0116"/>
<dbReference type="KEGG" id="cpc:Cpar_0116"/>
<dbReference type="eggNOG" id="COG0291">
    <property type="taxonomic scope" value="Bacteria"/>
</dbReference>
<dbReference type="HOGENOM" id="CLU_169643_4_3_10"/>
<dbReference type="OrthoDB" id="47476at2"/>
<dbReference type="Proteomes" id="UP000008811">
    <property type="component" value="Chromosome"/>
</dbReference>
<dbReference type="GO" id="GO:0022625">
    <property type="term" value="C:cytosolic large ribosomal subunit"/>
    <property type="evidence" value="ECO:0007669"/>
    <property type="project" value="TreeGrafter"/>
</dbReference>
<dbReference type="GO" id="GO:0003735">
    <property type="term" value="F:structural constituent of ribosome"/>
    <property type="evidence" value="ECO:0007669"/>
    <property type="project" value="InterPro"/>
</dbReference>
<dbReference type="GO" id="GO:0006412">
    <property type="term" value="P:translation"/>
    <property type="evidence" value="ECO:0007669"/>
    <property type="project" value="UniProtKB-UniRule"/>
</dbReference>
<dbReference type="FunFam" id="4.10.410.60:FF:000001">
    <property type="entry name" value="50S ribosomal protein L35"/>
    <property type="match status" value="1"/>
</dbReference>
<dbReference type="Gene3D" id="4.10.410.60">
    <property type="match status" value="1"/>
</dbReference>
<dbReference type="HAMAP" id="MF_00514">
    <property type="entry name" value="Ribosomal_bL35"/>
    <property type="match status" value="1"/>
</dbReference>
<dbReference type="InterPro" id="IPR001706">
    <property type="entry name" value="Ribosomal_bL35"/>
</dbReference>
<dbReference type="InterPro" id="IPR021137">
    <property type="entry name" value="Ribosomal_bL35-like"/>
</dbReference>
<dbReference type="InterPro" id="IPR018265">
    <property type="entry name" value="Ribosomal_bL35_CS"/>
</dbReference>
<dbReference type="InterPro" id="IPR037229">
    <property type="entry name" value="Ribosomal_bL35_sf"/>
</dbReference>
<dbReference type="NCBIfam" id="TIGR00001">
    <property type="entry name" value="rpmI_bact"/>
    <property type="match status" value="1"/>
</dbReference>
<dbReference type="PANTHER" id="PTHR33343">
    <property type="entry name" value="54S RIBOSOMAL PROTEIN BL35M"/>
    <property type="match status" value="1"/>
</dbReference>
<dbReference type="PANTHER" id="PTHR33343:SF1">
    <property type="entry name" value="LARGE RIBOSOMAL SUBUNIT PROTEIN BL35M"/>
    <property type="match status" value="1"/>
</dbReference>
<dbReference type="Pfam" id="PF01632">
    <property type="entry name" value="Ribosomal_L35p"/>
    <property type="match status" value="1"/>
</dbReference>
<dbReference type="PRINTS" id="PR00064">
    <property type="entry name" value="RIBOSOMALL35"/>
</dbReference>
<dbReference type="SUPFAM" id="SSF143034">
    <property type="entry name" value="L35p-like"/>
    <property type="match status" value="1"/>
</dbReference>
<dbReference type="PROSITE" id="PS00936">
    <property type="entry name" value="RIBOSOMAL_L35"/>
    <property type="match status" value="1"/>
</dbReference>
<gene>
    <name evidence="1" type="primary">rpmI</name>
    <name type="ordered locus">Cpar_0116</name>
</gene>